<sequence>MLTITAIKAFNDNYIWVLQQQPHTQVYVVDPGDASVVIDYLEANQLTLAGILLTHHHNDHTGGVAELQAYSQNRLTVYGPDNEKIEGITHPLNATAQPRFILDYMSGELQVLDVPGHTAGHIAYVIADALFCGDTLFSAGCGRLFEGTPAQMLNSLQQLAQLPADTRVYCAHEYTLSNLKFALAVNPNNRALQDYNERAVALRRQDKATIPSTIALERAINPFLRASDTEIVDSIKQHFSDLNHANLDELGGFTLLRQWKDNF</sequence>
<gene>
    <name evidence="1" type="primary">gloB</name>
    <name type="ordered locus">Sbal_1996</name>
</gene>
<organism>
    <name type="scientific">Shewanella baltica (strain OS155 / ATCC BAA-1091)</name>
    <dbReference type="NCBI Taxonomy" id="325240"/>
    <lineage>
        <taxon>Bacteria</taxon>
        <taxon>Pseudomonadati</taxon>
        <taxon>Pseudomonadota</taxon>
        <taxon>Gammaproteobacteria</taxon>
        <taxon>Alteromonadales</taxon>
        <taxon>Shewanellaceae</taxon>
        <taxon>Shewanella</taxon>
    </lineage>
</organism>
<protein>
    <recommendedName>
        <fullName evidence="1">Hydroxyacylglutathione hydrolase</fullName>
        <ecNumber evidence="1">3.1.2.6</ecNumber>
    </recommendedName>
    <alternativeName>
        <fullName evidence="1">Glyoxalase II</fullName>
        <shortName evidence="1">Glx II</shortName>
    </alternativeName>
</protein>
<keyword id="KW-0378">Hydrolase</keyword>
<keyword id="KW-0479">Metal-binding</keyword>
<keyword id="KW-1185">Reference proteome</keyword>
<keyword id="KW-0862">Zinc</keyword>
<evidence type="ECO:0000255" key="1">
    <source>
        <dbReference type="HAMAP-Rule" id="MF_01374"/>
    </source>
</evidence>
<comment type="function">
    <text evidence="1">Thiolesterase that catalyzes the hydrolysis of S-D-lactoyl-glutathione to form glutathione and D-lactic acid.</text>
</comment>
<comment type="catalytic activity">
    <reaction evidence="1">
        <text>an S-(2-hydroxyacyl)glutathione + H2O = a 2-hydroxy carboxylate + glutathione + H(+)</text>
        <dbReference type="Rhea" id="RHEA:21864"/>
        <dbReference type="ChEBI" id="CHEBI:15377"/>
        <dbReference type="ChEBI" id="CHEBI:15378"/>
        <dbReference type="ChEBI" id="CHEBI:57925"/>
        <dbReference type="ChEBI" id="CHEBI:58896"/>
        <dbReference type="ChEBI" id="CHEBI:71261"/>
        <dbReference type="EC" id="3.1.2.6"/>
    </reaction>
</comment>
<comment type="cofactor">
    <cofactor evidence="1">
        <name>Zn(2+)</name>
        <dbReference type="ChEBI" id="CHEBI:29105"/>
    </cofactor>
    <text evidence="1">Binds 2 Zn(2+) ions per subunit.</text>
</comment>
<comment type="pathway">
    <text evidence="1">Secondary metabolite metabolism; methylglyoxal degradation; (R)-lactate from methylglyoxal: step 2/2.</text>
</comment>
<comment type="subunit">
    <text evidence="1">Monomer.</text>
</comment>
<comment type="similarity">
    <text evidence="1">Belongs to the metallo-beta-lactamase superfamily. Glyoxalase II family.</text>
</comment>
<proteinExistence type="inferred from homology"/>
<dbReference type="EC" id="3.1.2.6" evidence="1"/>
<dbReference type="EMBL" id="CP000563">
    <property type="protein sequence ID" value="ABN61500.1"/>
    <property type="molecule type" value="Genomic_DNA"/>
</dbReference>
<dbReference type="RefSeq" id="WP_011846726.1">
    <property type="nucleotide sequence ID" value="NC_009052.1"/>
</dbReference>
<dbReference type="SMR" id="A3D437"/>
<dbReference type="STRING" id="325240.Sbal_1996"/>
<dbReference type="KEGG" id="sbl:Sbal_1996"/>
<dbReference type="HOGENOM" id="CLU_030571_4_1_6"/>
<dbReference type="OrthoDB" id="9802248at2"/>
<dbReference type="UniPathway" id="UPA00619">
    <property type="reaction ID" value="UER00676"/>
</dbReference>
<dbReference type="Proteomes" id="UP000001557">
    <property type="component" value="Chromosome"/>
</dbReference>
<dbReference type="GO" id="GO:0004416">
    <property type="term" value="F:hydroxyacylglutathione hydrolase activity"/>
    <property type="evidence" value="ECO:0007669"/>
    <property type="project" value="UniProtKB-UniRule"/>
</dbReference>
<dbReference type="GO" id="GO:0046872">
    <property type="term" value="F:metal ion binding"/>
    <property type="evidence" value="ECO:0007669"/>
    <property type="project" value="UniProtKB-KW"/>
</dbReference>
<dbReference type="GO" id="GO:0019243">
    <property type="term" value="P:methylglyoxal catabolic process to D-lactate via S-lactoyl-glutathione"/>
    <property type="evidence" value="ECO:0007669"/>
    <property type="project" value="InterPro"/>
</dbReference>
<dbReference type="CDD" id="cd07723">
    <property type="entry name" value="hydroxyacylglutathione_hydrolase_MBL-fold"/>
    <property type="match status" value="1"/>
</dbReference>
<dbReference type="Gene3D" id="3.60.15.10">
    <property type="entry name" value="Ribonuclease Z/Hydroxyacylglutathione hydrolase-like"/>
    <property type="match status" value="1"/>
</dbReference>
<dbReference type="HAMAP" id="MF_01374">
    <property type="entry name" value="Glyoxalase_2"/>
    <property type="match status" value="1"/>
</dbReference>
<dbReference type="InterPro" id="IPR035680">
    <property type="entry name" value="Clx_II_MBL"/>
</dbReference>
<dbReference type="InterPro" id="IPR050110">
    <property type="entry name" value="Glyoxalase_II_hydrolase"/>
</dbReference>
<dbReference type="InterPro" id="IPR032282">
    <property type="entry name" value="HAGH_C"/>
</dbReference>
<dbReference type="InterPro" id="IPR017782">
    <property type="entry name" value="Hydroxyacylglutathione_Hdrlase"/>
</dbReference>
<dbReference type="InterPro" id="IPR001279">
    <property type="entry name" value="Metallo-B-lactamas"/>
</dbReference>
<dbReference type="InterPro" id="IPR036866">
    <property type="entry name" value="RibonucZ/Hydroxyglut_hydro"/>
</dbReference>
<dbReference type="NCBIfam" id="TIGR03413">
    <property type="entry name" value="GSH_gloB"/>
    <property type="match status" value="1"/>
</dbReference>
<dbReference type="PANTHER" id="PTHR43705">
    <property type="entry name" value="HYDROXYACYLGLUTATHIONE HYDROLASE"/>
    <property type="match status" value="1"/>
</dbReference>
<dbReference type="PANTHER" id="PTHR43705:SF1">
    <property type="entry name" value="HYDROXYACYLGLUTATHIONE HYDROLASE GLOB"/>
    <property type="match status" value="1"/>
</dbReference>
<dbReference type="Pfam" id="PF16123">
    <property type="entry name" value="HAGH_C"/>
    <property type="match status" value="1"/>
</dbReference>
<dbReference type="Pfam" id="PF00753">
    <property type="entry name" value="Lactamase_B"/>
    <property type="match status" value="2"/>
</dbReference>
<dbReference type="PIRSF" id="PIRSF005457">
    <property type="entry name" value="Glx"/>
    <property type="match status" value="1"/>
</dbReference>
<dbReference type="SMART" id="SM00849">
    <property type="entry name" value="Lactamase_B"/>
    <property type="match status" value="1"/>
</dbReference>
<dbReference type="SUPFAM" id="SSF56281">
    <property type="entry name" value="Metallo-hydrolase/oxidoreductase"/>
    <property type="match status" value="1"/>
</dbReference>
<reference key="1">
    <citation type="submission" date="2007-02" db="EMBL/GenBank/DDBJ databases">
        <title>Complete sequence of chromosome of Shewanella baltica OS155.</title>
        <authorList>
            <consortium name="US DOE Joint Genome Institute"/>
            <person name="Copeland A."/>
            <person name="Lucas S."/>
            <person name="Lapidus A."/>
            <person name="Barry K."/>
            <person name="Detter J.C."/>
            <person name="Glavina del Rio T."/>
            <person name="Hammon N."/>
            <person name="Israni S."/>
            <person name="Dalin E."/>
            <person name="Tice H."/>
            <person name="Pitluck S."/>
            <person name="Sims D.R."/>
            <person name="Brettin T."/>
            <person name="Bruce D."/>
            <person name="Han C."/>
            <person name="Tapia R."/>
            <person name="Brainard J."/>
            <person name="Schmutz J."/>
            <person name="Larimer F."/>
            <person name="Land M."/>
            <person name="Hauser L."/>
            <person name="Kyrpides N."/>
            <person name="Mikhailova N."/>
            <person name="Brettar I."/>
            <person name="Klappenbach J."/>
            <person name="Konstantinidis K."/>
            <person name="Rodrigues J."/>
            <person name="Tiedje J."/>
            <person name="Richardson P."/>
        </authorList>
    </citation>
    <scope>NUCLEOTIDE SEQUENCE [LARGE SCALE GENOMIC DNA]</scope>
    <source>
        <strain>OS155 / ATCC BAA-1091</strain>
    </source>
</reference>
<accession>A3D437</accession>
<feature type="chain" id="PRO_1000144803" description="Hydroxyacylglutathione hydrolase">
    <location>
        <begin position="1"/>
        <end position="263"/>
    </location>
</feature>
<feature type="binding site" evidence="1">
    <location>
        <position position="55"/>
    </location>
    <ligand>
        <name>Zn(2+)</name>
        <dbReference type="ChEBI" id="CHEBI:29105"/>
        <label>1</label>
    </ligand>
</feature>
<feature type="binding site" evidence="1">
    <location>
        <position position="57"/>
    </location>
    <ligand>
        <name>Zn(2+)</name>
        <dbReference type="ChEBI" id="CHEBI:29105"/>
        <label>1</label>
    </ligand>
</feature>
<feature type="binding site" evidence="1">
    <location>
        <position position="59"/>
    </location>
    <ligand>
        <name>Zn(2+)</name>
        <dbReference type="ChEBI" id="CHEBI:29105"/>
        <label>2</label>
    </ligand>
</feature>
<feature type="binding site" evidence="1">
    <location>
        <position position="60"/>
    </location>
    <ligand>
        <name>Zn(2+)</name>
        <dbReference type="ChEBI" id="CHEBI:29105"/>
        <label>2</label>
    </ligand>
</feature>
<feature type="binding site" evidence="1">
    <location>
        <position position="117"/>
    </location>
    <ligand>
        <name>Zn(2+)</name>
        <dbReference type="ChEBI" id="CHEBI:29105"/>
        <label>1</label>
    </ligand>
</feature>
<feature type="binding site" evidence="1">
    <location>
        <position position="134"/>
    </location>
    <ligand>
        <name>Zn(2+)</name>
        <dbReference type="ChEBI" id="CHEBI:29105"/>
        <label>1</label>
    </ligand>
</feature>
<feature type="binding site" evidence="1">
    <location>
        <position position="134"/>
    </location>
    <ligand>
        <name>Zn(2+)</name>
        <dbReference type="ChEBI" id="CHEBI:29105"/>
        <label>2</label>
    </ligand>
</feature>
<feature type="binding site" evidence="1">
    <location>
        <position position="172"/>
    </location>
    <ligand>
        <name>Zn(2+)</name>
        <dbReference type="ChEBI" id="CHEBI:29105"/>
        <label>2</label>
    </ligand>
</feature>
<name>GLO2_SHEB5</name>